<comment type="function">
    <text evidence="1">Transaldolase is important for the balance of metabolites in the pentose-phosphate pathway.</text>
</comment>
<comment type="catalytic activity">
    <reaction evidence="1">
        <text>D-sedoheptulose 7-phosphate + D-glyceraldehyde 3-phosphate = D-erythrose 4-phosphate + beta-D-fructose 6-phosphate</text>
        <dbReference type="Rhea" id="RHEA:17053"/>
        <dbReference type="ChEBI" id="CHEBI:16897"/>
        <dbReference type="ChEBI" id="CHEBI:57483"/>
        <dbReference type="ChEBI" id="CHEBI:57634"/>
        <dbReference type="ChEBI" id="CHEBI:59776"/>
        <dbReference type="EC" id="2.2.1.2"/>
    </reaction>
</comment>
<comment type="pathway">
    <text evidence="1">Carbohydrate degradation; pentose phosphate pathway; D-glyceraldehyde 3-phosphate and beta-D-fructose 6-phosphate from D-ribose 5-phosphate and D-xylulose 5-phosphate (non-oxidative stage): step 2/3.</text>
</comment>
<comment type="subcellular location">
    <subcellularLocation>
        <location evidence="1">Cytoplasm</location>
    </subcellularLocation>
</comment>
<comment type="similarity">
    <text evidence="1">Belongs to the transaldolase family. Type 3B subfamily.</text>
</comment>
<gene>
    <name evidence="1" type="primary">tal1</name>
    <name type="ordered locus">BC_0665</name>
</gene>
<sequence>MKFFIDTANINEIKEANELGVLAGVTTNPSLVAKEGVDFHERIREICNVVEGPVSAEVISLEADKMIEEGKELAKIAPNVVVKVPMTTEGLKAVKAFSDLGIRTNVTLVFSAVQALLAARAGATYVSPFLGRLDDIGHNGMDLIRQIAEIFAIHGIETEIIAASVRHSVHVTDAALNGAHIATIPANVIASLVKHPLTDQGIEKFLADWEKTQEK</sequence>
<keyword id="KW-0963">Cytoplasm</keyword>
<keyword id="KW-0570">Pentose shunt</keyword>
<keyword id="KW-1185">Reference proteome</keyword>
<keyword id="KW-0704">Schiff base</keyword>
<keyword id="KW-0808">Transferase</keyword>
<organism>
    <name type="scientific">Bacillus cereus (strain ATCC 14579 / DSM 31 / CCUG 7414 / JCM 2152 / NBRC 15305 / NCIMB 9373 / NCTC 2599 / NRRL B-3711)</name>
    <dbReference type="NCBI Taxonomy" id="226900"/>
    <lineage>
        <taxon>Bacteria</taxon>
        <taxon>Bacillati</taxon>
        <taxon>Bacillota</taxon>
        <taxon>Bacilli</taxon>
        <taxon>Bacillales</taxon>
        <taxon>Bacillaceae</taxon>
        <taxon>Bacillus</taxon>
        <taxon>Bacillus cereus group</taxon>
    </lineage>
</organism>
<name>TAL1_BACCR</name>
<evidence type="ECO:0000255" key="1">
    <source>
        <dbReference type="HAMAP-Rule" id="MF_00494"/>
    </source>
</evidence>
<protein>
    <recommendedName>
        <fullName evidence="1">Probable transaldolase 1</fullName>
        <ecNumber evidence="1">2.2.1.2</ecNumber>
    </recommendedName>
</protein>
<dbReference type="EC" id="2.2.1.2" evidence="1"/>
<dbReference type="EMBL" id="AE016877">
    <property type="protein sequence ID" value="AAP07679.1"/>
    <property type="molecule type" value="Genomic_DNA"/>
</dbReference>
<dbReference type="RefSeq" id="NP_830478.1">
    <property type="nucleotide sequence ID" value="NC_004722.1"/>
</dbReference>
<dbReference type="SMR" id="Q81HW6"/>
<dbReference type="STRING" id="226900.BC_0665"/>
<dbReference type="KEGG" id="bce:BC0665"/>
<dbReference type="PATRIC" id="fig|226900.8.peg.626"/>
<dbReference type="HOGENOM" id="CLU_079764_0_0_9"/>
<dbReference type="OrthoDB" id="9807051at2"/>
<dbReference type="UniPathway" id="UPA00115">
    <property type="reaction ID" value="UER00414"/>
</dbReference>
<dbReference type="Proteomes" id="UP000001417">
    <property type="component" value="Chromosome"/>
</dbReference>
<dbReference type="GO" id="GO:0005737">
    <property type="term" value="C:cytoplasm"/>
    <property type="evidence" value="ECO:0007669"/>
    <property type="project" value="UniProtKB-SubCell"/>
</dbReference>
<dbReference type="GO" id="GO:0016832">
    <property type="term" value="F:aldehyde-lyase activity"/>
    <property type="evidence" value="ECO:0007669"/>
    <property type="project" value="InterPro"/>
</dbReference>
<dbReference type="GO" id="GO:0004801">
    <property type="term" value="F:transaldolase activity"/>
    <property type="evidence" value="ECO:0007669"/>
    <property type="project" value="UniProtKB-UniRule"/>
</dbReference>
<dbReference type="GO" id="GO:0005975">
    <property type="term" value="P:carbohydrate metabolic process"/>
    <property type="evidence" value="ECO:0007669"/>
    <property type="project" value="InterPro"/>
</dbReference>
<dbReference type="GO" id="GO:0006098">
    <property type="term" value="P:pentose-phosphate shunt"/>
    <property type="evidence" value="ECO:0007669"/>
    <property type="project" value="UniProtKB-UniRule"/>
</dbReference>
<dbReference type="CDD" id="cd00956">
    <property type="entry name" value="Transaldolase_FSA"/>
    <property type="match status" value="1"/>
</dbReference>
<dbReference type="FunFam" id="3.20.20.70:FF:000018">
    <property type="entry name" value="Probable transaldolase"/>
    <property type="match status" value="1"/>
</dbReference>
<dbReference type="Gene3D" id="3.20.20.70">
    <property type="entry name" value="Aldolase class I"/>
    <property type="match status" value="1"/>
</dbReference>
<dbReference type="HAMAP" id="MF_00494">
    <property type="entry name" value="Transaldolase_3b"/>
    <property type="match status" value="1"/>
</dbReference>
<dbReference type="InterPro" id="IPR013785">
    <property type="entry name" value="Aldolase_TIM"/>
</dbReference>
<dbReference type="InterPro" id="IPR001585">
    <property type="entry name" value="TAL/FSA"/>
</dbReference>
<dbReference type="InterPro" id="IPR022999">
    <property type="entry name" value="Transaldolase_3B"/>
</dbReference>
<dbReference type="InterPro" id="IPR004731">
    <property type="entry name" value="Transaldolase_3B/F6P_aldolase"/>
</dbReference>
<dbReference type="InterPro" id="IPR018225">
    <property type="entry name" value="Transaldolase_AS"/>
</dbReference>
<dbReference type="InterPro" id="IPR033919">
    <property type="entry name" value="TSA/FSA_arc/bac"/>
</dbReference>
<dbReference type="NCBIfam" id="TIGR00875">
    <property type="entry name" value="fsa_talC_mipB"/>
    <property type="match status" value="1"/>
</dbReference>
<dbReference type="PANTHER" id="PTHR10683">
    <property type="entry name" value="TRANSALDOLASE"/>
    <property type="match status" value="1"/>
</dbReference>
<dbReference type="PANTHER" id="PTHR10683:SF36">
    <property type="entry name" value="TRANSALDOLASE"/>
    <property type="match status" value="1"/>
</dbReference>
<dbReference type="Pfam" id="PF00923">
    <property type="entry name" value="TAL_FSA"/>
    <property type="match status" value="1"/>
</dbReference>
<dbReference type="SUPFAM" id="SSF51569">
    <property type="entry name" value="Aldolase"/>
    <property type="match status" value="1"/>
</dbReference>
<dbReference type="PROSITE" id="PS01054">
    <property type="entry name" value="TRANSALDOLASE_1"/>
    <property type="match status" value="1"/>
</dbReference>
<dbReference type="PROSITE" id="PS00958">
    <property type="entry name" value="TRANSALDOLASE_2"/>
    <property type="match status" value="1"/>
</dbReference>
<proteinExistence type="inferred from homology"/>
<feature type="chain" id="PRO_0000173655" description="Probable transaldolase 1">
    <location>
        <begin position="1"/>
        <end position="215"/>
    </location>
</feature>
<feature type="active site" description="Schiff-base intermediate with substrate" evidence="1">
    <location>
        <position position="83"/>
    </location>
</feature>
<accession>Q81HW6</accession>
<reference key="1">
    <citation type="journal article" date="2003" name="Nature">
        <title>Genome sequence of Bacillus cereus and comparative analysis with Bacillus anthracis.</title>
        <authorList>
            <person name="Ivanova N."/>
            <person name="Sorokin A."/>
            <person name="Anderson I."/>
            <person name="Galleron N."/>
            <person name="Candelon B."/>
            <person name="Kapatral V."/>
            <person name="Bhattacharyya A."/>
            <person name="Reznik G."/>
            <person name="Mikhailova N."/>
            <person name="Lapidus A."/>
            <person name="Chu L."/>
            <person name="Mazur M."/>
            <person name="Goltsman E."/>
            <person name="Larsen N."/>
            <person name="D'Souza M."/>
            <person name="Walunas T."/>
            <person name="Grechkin Y."/>
            <person name="Pusch G."/>
            <person name="Haselkorn R."/>
            <person name="Fonstein M."/>
            <person name="Ehrlich S.D."/>
            <person name="Overbeek R."/>
            <person name="Kyrpides N.C."/>
        </authorList>
    </citation>
    <scope>NUCLEOTIDE SEQUENCE [LARGE SCALE GENOMIC DNA]</scope>
    <source>
        <strain>ATCC 14579 / DSM 31 / CCUG 7414 / JCM 2152 / NBRC 15305 / NCIMB 9373 / NCTC 2599 / NRRL B-3711</strain>
    </source>
</reference>